<reference key="1">
    <citation type="journal article" date="2010" name="Genome Biol. Evol.">
        <title>Continuing evolution of Burkholderia mallei through genome reduction and large-scale rearrangements.</title>
        <authorList>
            <person name="Losada L."/>
            <person name="Ronning C.M."/>
            <person name="DeShazer D."/>
            <person name="Woods D."/>
            <person name="Fedorova N."/>
            <person name="Kim H.S."/>
            <person name="Shabalina S.A."/>
            <person name="Pearson T.R."/>
            <person name="Brinkac L."/>
            <person name="Tan P."/>
            <person name="Nandi T."/>
            <person name="Crabtree J."/>
            <person name="Badger J."/>
            <person name="Beckstrom-Sternberg S."/>
            <person name="Saqib M."/>
            <person name="Schutzer S.E."/>
            <person name="Keim P."/>
            <person name="Nierman W.C."/>
        </authorList>
    </citation>
    <scope>NUCLEOTIDE SEQUENCE [LARGE SCALE GENOMIC DNA]</scope>
    <source>
        <strain>SAVP1</strain>
    </source>
</reference>
<keyword id="KW-0378">Hydrolase</keyword>
<name>GCH4_BURMS</name>
<organism>
    <name type="scientific">Burkholderia mallei (strain SAVP1)</name>
    <dbReference type="NCBI Taxonomy" id="320388"/>
    <lineage>
        <taxon>Bacteria</taxon>
        <taxon>Pseudomonadati</taxon>
        <taxon>Pseudomonadota</taxon>
        <taxon>Betaproteobacteria</taxon>
        <taxon>Burkholderiales</taxon>
        <taxon>Burkholderiaceae</taxon>
        <taxon>Burkholderia</taxon>
        <taxon>pseudomallei group</taxon>
    </lineage>
</organism>
<dbReference type="EC" id="3.5.4.16" evidence="1"/>
<dbReference type="EMBL" id="CP000525">
    <property type="protein sequence ID" value="ABM47900.1"/>
    <property type="status" value="ALT_INIT"/>
    <property type="molecule type" value="Genomic_DNA"/>
</dbReference>
<dbReference type="RefSeq" id="WP_004195713.1">
    <property type="nucleotide sequence ID" value="NC_008784.1"/>
</dbReference>
<dbReference type="SMR" id="A1UYQ5"/>
<dbReference type="GeneID" id="93063968"/>
<dbReference type="KEGG" id="bmv:BMASAVP1_1514"/>
<dbReference type="HOGENOM" id="CLU_062816_1_1_4"/>
<dbReference type="UniPathway" id="UPA00848">
    <property type="reaction ID" value="UER00151"/>
</dbReference>
<dbReference type="GO" id="GO:0003934">
    <property type="term" value="F:GTP cyclohydrolase I activity"/>
    <property type="evidence" value="ECO:0007669"/>
    <property type="project" value="UniProtKB-UniRule"/>
</dbReference>
<dbReference type="GO" id="GO:0046654">
    <property type="term" value="P:tetrahydrofolate biosynthetic process"/>
    <property type="evidence" value="ECO:0007669"/>
    <property type="project" value="UniProtKB-UniRule"/>
</dbReference>
<dbReference type="Gene3D" id="3.10.270.10">
    <property type="entry name" value="Urate Oxidase"/>
    <property type="match status" value="1"/>
</dbReference>
<dbReference type="HAMAP" id="MF_01527_B">
    <property type="entry name" value="GTP_cyclohydrol_B"/>
    <property type="match status" value="1"/>
</dbReference>
<dbReference type="InterPro" id="IPR022838">
    <property type="entry name" value="GTP_cyclohydrolase_FolE2"/>
</dbReference>
<dbReference type="InterPro" id="IPR003801">
    <property type="entry name" value="GTP_cyclohydrolase_FolE2/MptA"/>
</dbReference>
<dbReference type="NCBIfam" id="NF010200">
    <property type="entry name" value="PRK13674.1-1"/>
    <property type="match status" value="1"/>
</dbReference>
<dbReference type="PANTHER" id="PTHR36445">
    <property type="entry name" value="GTP CYCLOHYDROLASE MPTA"/>
    <property type="match status" value="1"/>
</dbReference>
<dbReference type="PANTHER" id="PTHR36445:SF1">
    <property type="entry name" value="GTP CYCLOHYDROLASE MPTA"/>
    <property type="match status" value="1"/>
</dbReference>
<dbReference type="Pfam" id="PF02649">
    <property type="entry name" value="GCHY-1"/>
    <property type="match status" value="1"/>
</dbReference>
<gene>
    <name evidence="1" type="primary">folE2</name>
    <name type="ordered locus">BMASAVP1_1514</name>
</gene>
<evidence type="ECO:0000255" key="1">
    <source>
        <dbReference type="HAMAP-Rule" id="MF_01527"/>
    </source>
</evidence>
<evidence type="ECO:0000305" key="2"/>
<proteinExistence type="inferred from homology"/>
<sequence>MNLMNPEFAMPDVQSTVDTRQMPIQRVGVRAVRHPLTVRTAEGETQATVGTWNLDVHLPADQKGTHMSRFVALLEERGGPLTADAFRTMLATMLEKLEARAGRIEVSFPYFVNKTAPVSGVRSLLDYEVTLTGDVRDGLTRVFAKVLVPVTSLCPCSKKISQYGAHNQRSHVTIDAELAADVPVEDLIRIAEEEASCELWGLLKRPDEKFVTERAYENPKFVEDLVRDVARRLDADERIVAYVLEAENFESIHNHSAYALIERDKRRGA</sequence>
<accession>A1UYQ5</accession>
<protein>
    <recommendedName>
        <fullName evidence="1">GTP cyclohydrolase FolE2</fullName>
        <ecNumber evidence="1">3.5.4.16</ecNumber>
    </recommendedName>
</protein>
<feature type="chain" id="PRO_0000316528" description="GTP cyclohydrolase FolE2">
    <location>
        <begin position="1"/>
        <end position="269"/>
    </location>
</feature>
<feature type="site" description="May be catalytically important" evidence="1">
    <location>
        <position position="154"/>
    </location>
</feature>
<comment type="function">
    <text evidence="1">Converts GTP to 7,8-dihydroneopterin triphosphate.</text>
</comment>
<comment type="catalytic activity">
    <reaction evidence="1">
        <text>GTP + H2O = 7,8-dihydroneopterin 3'-triphosphate + formate + H(+)</text>
        <dbReference type="Rhea" id="RHEA:17473"/>
        <dbReference type="ChEBI" id="CHEBI:15377"/>
        <dbReference type="ChEBI" id="CHEBI:15378"/>
        <dbReference type="ChEBI" id="CHEBI:15740"/>
        <dbReference type="ChEBI" id="CHEBI:37565"/>
        <dbReference type="ChEBI" id="CHEBI:58462"/>
        <dbReference type="EC" id="3.5.4.16"/>
    </reaction>
</comment>
<comment type="pathway">
    <text evidence="1">Cofactor biosynthesis; 7,8-dihydroneopterin triphosphate biosynthesis; 7,8-dihydroneopterin triphosphate from GTP: step 1/1.</text>
</comment>
<comment type="similarity">
    <text evidence="1">Belongs to the GTP cyclohydrolase IV family.</text>
</comment>
<comment type="sequence caution" evidence="2">
    <conflict type="erroneous initiation">
        <sequence resource="EMBL-CDS" id="ABM47900"/>
    </conflict>
</comment>